<dbReference type="EMBL" id="AY653733">
    <property type="protein sequence ID" value="AAV50971.1"/>
    <property type="molecule type" value="Genomic_DNA"/>
</dbReference>
<dbReference type="SMR" id="Q5UQ55"/>
<dbReference type="Proteomes" id="UP000001134">
    <property type="component" value="Genome"/>
</dbReference>
<reference key="1">
    <citation type="journal article" date="2004" name="Science">
        <title>The 1.2-megabase genome sequence of Mimivirus.</title>
        <authorList>
            <person name="Raoult D."/>
            <person name="Audic S."/>
            <person name="Robert C."/>
            <person name="Abergel C."/>
            <person name="Renesto P."/>
            <person name="Ogata H."/>
            <person name="La Scola B."/>
            <person name="Susan M."/>
            <person name="Claverie J.-M."/>
        </authorList>
    </citation>
    <scope>NUCLEOTIDE SEQUENCE [LARGE SCALE GENOMIC DNA]</scope>
    <source>
        <strain>Rowbotham-Bradford</strain>
    </source>
</reference>
<feature type="chain" id="PRO_0000247374" description="Uncharacterized protein L711">
    <location>
        <begin position="1"/>
        <end position="374"/>
    </location>
</feature>
<feature type="coiled-coil region" evidence="1">
    <location>
        <begin position="298"/>
        <end position="332"/>
    </location>
</feature>
<organismHost>
    <name type="scientific">Acanthamoeba polyphaga</name>
    <name type="common">Amoeba</name>
    <dbReference type="NCBI Taxonomy" id="5757"/>
</organismHost>
<sequence>MIFLPDFSEKIRKFYLNLSIKIEKIKTLSKINLYCYINLFYRTNIQMSLEISVLGTKKSLSSILGNSNESSKETTTYKSQNQQFQSQSIHTQQKIIEKKYDNQNDRFQRDVFSRPNVKPSNTQSLQARVNMANSYDRNSLAWIVECLKTEVMNRGLNSINQNLHSSDIELLKNFKTKFTNYQNNWNGLMGFMMKNIVKIDDKYMLHNFFGIKEIVVNQIINISLSYILIGAPIENEIKLFILNTVPLAFNTIHVINTKISKINRTIEELSSQKQYNSYTIQEFESEIKTNPKIKNNHTKEKLLKLHSEQKSLSEKINKLSGEKDIEQSMINNEIYKLVTGLSFNYFMHDDWCPPLDNNIIKETQTKSNIISLFF</sequence>
<organism>
    <name type="scientific">Acanthamoeba polyphaga mimivirus</name>
    <name type="common">APMV</name>
    <dbReference type="NCBI Taxonomy" id="212035"/>
    <lineage>
        <taxon>Viruses</taxon>
        <taxon>Varidnaviria</taxon>
        <taxon>Bamfordvirae</taxon>
        <taxon>Nucleocytoviricota</taxon>
        <taxon>Megaviricetes</taxon>
        <taxon>Imitervirales</taxon>
        <taxon>Mimiviridae</taxon>
        <taxon>Megamimivirinae</taxon>
        <taxon>Mimivirus</taxon>
        <taxon>Mimivirus bradfordmassiliense</taxon>
    </lineage>
</organism>
<keyword id="KW-0175">Coiled coil</keyword>
<keyword id="KW-1185">Reference proteome</keyword>
<accession>Q5UQ55</accession>
<evidence type="ECO:0000255" key="1"/>
<name>YL711_MIMIV</name>
<proteinExistence type="predicted"/>
<protein>
    <recommendedName>
        <fullName>Uncharacterized protein L711</fullName>
    </recommendedName>
</protein>
<gene>
    <name type="ordered locus">MIMI_L711</name>
</gene>